<evidence type="ECO:0000255" key="1">
    <source>
        <dbReference type="HAMAP-Rule" id="MF_01007"/>
    </source>
</evidence>
<keyword id="KW-0963">Cytoplasm</keyword>
<keyword id="KW-0489">Methyltransferase</keyword>
<keyword id="KW-0698">rRNA processing</keyword>
<keyword id="KW-0949">S-adenosyl-L-methionine</keyword>
<keyword id="KW-0808">Transferase</keyword>
<comment type="function">
    <text evidence="1">Specifically methylates the N4 position of cytidine in position 1402 (C1402) of 16S rRNA.</text>
</comment>
<comment type="catalytic activity">
    <reaction evidence="1">
        <text>cytidine(1402) in 16S rRNA + S-adenosyl-L-methionine = N(4)-methylcytidine(1402) in 16S rRNA + S-adenosyl-L-homocysteine + H(+)</text>
        <dbReference type="Rhea" id="RHEA:42928"/>
        <dbReference type="Rhea" id="RHEA-COMP:10286"/>
        <dbReference type="Rhea" id="RHEA-COMP:10287"/>
        <dbReference type="ChEBI" id="CHEBI:15378"/>
        <dbReference type="ChEBI" id="CHEBI:57856"/>
        <dbReference type="ChEBI" id="CHEBI:59789"/>
        <dbReference type="ChEBI" id="CHEBI:74506"/>
        <dbReference type="ChEBI" id="CHEBI:82748"/>
        <dbReference type="EC" id="2.1.1.199"/>
    </reaction>
</comment>
<comment type="subcellular location">
    <subcellularLocation>
        <location evidence="1">Cytoplasm</location>
    </subcellularLocation>
</comment>
<comment type="similarity">
    <text evidence="1">Belongs to the methyltransferase superfamily. RsmH family.</text>
</comment>
<name>RSMH_HELPH</name>
<accession>Q1CTG3</accession>
<protein>
    <recommendedName>
        <fullName evidence="1">Ribosomal RNA small subunit methyltransferase H</fullName>
        <ecNumber evidence="1">2.1.1.199</ecNumber>
    </recommendedName>
    <alternativeName>
        <fullName evidence="1">16S rRNA m(4)C1402 methyltransferase</fullName>
    </alternativeName>
    <alternativeName>
        <fullName evidence="1">rRNA (cytosine-N(4)-)-methyltransferase RsmH</fullName>
    </alternativeName>
</protein>
<feature type="chain" id="PRO_1000062828" description="Ribosomal RNA small subunit methyltransferase H">
    <location>
        <begin position="1"/>
        <end position="308"/>
    </location>
</feature>
<feature type="binding site" evidence="1">
    <location>
        <begin position="36"/>
        <end position="38"/>
    </location>
    <ligand>
        <name>S-adenosyl-L-methionine</name>
        <dbReference type="ChEBI" id="CHEBI:59789"/>
    </ligand>
</feature>
<feature type="binding site" evidence="1">
    <location>
        <position position="55"/>
    </location>
    <ligand>
        <name>S-adenosyl-L-methionine</name>
        <dbReference type="ChEBI" id="CHEBI:59789"/>
    </ligand>
</feature>
<feature type="binding site" evidence="1">
    <location>
        <position position="86"/>
    </location>
    <ligand>
        <name>S-adenosyl-L-methionine</name>
        <dbReference type="ChEBI" id="CHEBI:59789"/>
    </ligand>
</feature>
<feature type="binding site" evidence="1">
    <location>
        <position position="103"/>
    </location>
    <ligand>
        <name>S-adenosyl-L-methionine</name>
        <dbReference type="ChEBI" id="CHEBI:59789"/>
    </ligand>
</feature>
<feature type="binding site" evidence="1">
    <location>
        <position position="110"/>
    </location>
    <ligand>
        <name>S-adenosyl-L-methionine</name>
        <dbReference type="ChEBI" id="CHEBI:59789"/>
    </ligand>
</feature>
<sequence length="308" mass="34842">MQEIESLHQSVLLQEVLQAFTPLEEGVLIDCTLGLGGHSKALLSQKPHLKLIGIDKDKFAQEIAKERLKAFEGRYNLLSGGFAKRFKEALETHNKEIKGVLVDLGVSSLQLDDDNRGFNFHSHTLDMRMDLKSDLNAQKVINSYPVVALEKIFRDYGEIKEYKKIAHKIAERRAKKPFKDAKDLSDFLSSLSKNKKIHPATLVFQAVRIEVNSELEELKEFLQCARNLKGAILCVISFHSLEDALVKNAFKDYAKNCICDPSSFQCTCSNNHALGAILTKKPITPSPEEIKNNRRSRSAKMRVFQFKP</sequence>
<proteinExistence type="inferred from homology"/>
<reference key="1">
    <citation type="journal article" date="2006" name="Proc. Natl. Acad. Sci. U.S.A.">
        <title>The complete genome sequence of a chronic atrophic gastritis Helicobacter pylori strain: evolution during disease progression.</title>
        <authorList>
            <person name="Oh J.D."/>
            <person name="Kling-Baeckhed H."/>
            <person name="Giannakis M."/>
            <person name="Xu J."/>
            <person name="Fulton R.S."/>
            <person name="Fulton L.A."/>
            <person name="Cordum H.S."/>
            <person name="Wang C."/>
            <person name="Elliott G."/>
            <person name="Edwards J."/>
            <person name="Mardis E.R."/>
            <person name="Engstrand L.G."/>
            <person name="Gordon J.I."/>
        </authorList>
    </citation>
    <scope>NUCLEOTIDE SEQUENCE [LARGE SCALE GENOMIC DNA]</scope>
    <source>
        <strain>HPAG1</strain>
    </source>
</reference>
<dbReference type="EC" id="2.1.1.199" evidence="1"/>
<dbReference type="EMBL" id="CP000241">
    <property type="protein sequence ID" value="ABF84759.1"/>
    <property type="molecule type" value="Genomic_DNA"/>
</dbReference>
<dbReference type="RefSeq" id="WP_001155583.1">
    <property type="nucleotide sequence ID" value="NC_008086.1"/>
</dbReference>
<dbReference type="SMR" id="Q1CTG3"/>
<dbReference type="KEGG" id="hpa:HPAG1_0692"/>
<dbReference type="HOGENOM" id="CLU_038422_3_0_7"/>
<dbReference type="GO" id="GO:0005737">
    <property type="term" value="C:cytoplasm"/>
    <property type="evidence" value="ECO:0007669"/>
    <property type="project" value="UniProtKB-SubCell"/>
</dbReference>
<dbReference type="GO" id="GO:0071424">
    <property type="term" value="F:rRNA (cytosine-N4-)-methyltransferase activity"/>
    <property type="evidence" value="ECO:0007669"/>
    <property type="project" value="UniProtKB-UniRule"/>
</dbReference>
<dbReference type="GO" id="GO:0070475">
    <property type="term" value="P:rRNA base methylation"/>
    <property type="evidence" value="ECO:0007669"/>
    <property type="project" value="UniProtKB-UniRule"/>
</dbReference>
<dbReference type="FunFam" id="1.10.150.170:FF:000008">
    <property type="entry name" value="Ribosomal RNA small subunit methyltransferase H"/>
    <property type="match status" value="1"/>
</dbReference>
<dbReference type="Gene3D" id="1.10.150.170">
    <property type="entry name" value="Putative methyltransferase TM0872, insert domain"/>
    <property type="match status" value="1"/>
</dbReference>
<dbReference type="Gene3D" id="3.40.50.150">
    <property type="entry name" value="Vaccinia Virus protein VP39"/>
    <property type="match status" value="1"/>
</dbReference>
<dbReference type="HAMAP" id="MF_01007">
    <property type="entry name" value="16SrRNA_methyltr_H"/>
    <property type="match status" value="1"/>
</dbReference>
<dbReference type="InterPro" id="IPR002903">
    <property type="entry name" value="RsmH"/>
</dbReference>
<dbReference type="InterPro" id="IPR023397">
    <property type="entry name" value="SAM-dep_MeTrfase_MraW_recog"/>
</dbReference>
<dbReference type="InterPro" id="IPR029063">
    <property type="entry name" value="SAM-dependent_MTases_sf"/>
</dbReference>
<dbReference type="NCBIfam" id="TIGR00006">
    <property type="entry name" value="16S rRNA (cytosine(1402)-N(4))-methyltransferase RsmH"/>
    <property type="match status" value="1"/>
</dbReference>
<dbReference type="PANTHER" id="PTHR11265:SF0">
    <property type="entry name" value="12S RRNA N4-METHYLCYTIDINE METHYLTRANSFERASE"/>
    <property type="match status" value="1"/>
</dbReference>
<dbReference type="PANTHER" id="PTHR11265">
    <property type="entry name" value="S-ADENOSYL-METHYLTRANSFERASE MRAW"/>
    <property type="match status" value="1"/>
</dbReference>
<dbReference type="Pfam" id="PF01795">
    <property type="entry name" value="Methyltransf_5"/>
    <property type="match status" value="1"/>
</dbReference>
<dbReference type="PIRSF" id="PIRSF004486">
    <property type="entry name" value="MraW"/>
    <property type="match status" value="1"/>
</dbReference>
<dbReference type="SUPFAM" id="SSF81799">
    <property type="entry name" value="Putative methyltransferase TM0872, insert domain"/>
    <property type="match status" value="1"/>
</dbReference>
<dbReference type="SUPFAM" id="SSF53335">
    <property type="entry name" value="S-adenosyl-L-methionine-dependent methyltransferases"/>
    <property type="match status" value="1"/>
</dbReference>
<gene>
    <name evidence="1" type="primary">rsmH</name>
    <name type="synonym">mraW</name>
    <name type="ordered locus">HPAG1_0692</name>
</gene>
<organism>
    <name type="scientific">Helicobacter pylori (strain HPAG1)</name>
    <dbReference type="NCBI Taxonomy" id="357544"/>
    <lineage>
        <taxon>Bacteria</taxon>
        <taxon>Pseudomonadati</taxon>
        <taxon>Campylobacterota</taxon>
        <taxon>Epsilonproteobacteria</taxon>
        <taxon>Campylobacterales</taxon>
        <taxon>Helicobacteraceae</taxon>
        <taxon>Helicobacter</taxon>
    </lineage>
</organism>